<protein>
    <recommendedName>
        <fullName>Cytochrome b</fullName>
    </recommendedName>
    <alternativeName>
        <fullName>Complex III subunit 3</fullName>
    </alternativeName>
    <alternativeName>
        <fullName>Complex III subunit III</fullName>
    </alternativeName>
    <alternativeName>
        <fullName>Cytochrome b-c1 complex subunit 3</fullName>
    </alternativeName>
    <alternativeName>
        <fullName>Ubiquinol-cytochrome-c reductase complex cytochrome b subunit</fullName>
    </alternativeName>
</protein>
<sequence>MTNLRKTHPLMKIVNSSFIDLPAPSNISSWWNFGSLLGVCLIIQILTGLFLAMHYTSDTMTAFSSVTHICRDVNYGWLIRYLHANGASMFFICLFLHVGRGLYYGSYMYLETWNIGVLLLFAVMATAFMGYVLPWGQMSFWGATVITNLLSAIPYIGSDLVEWIWGGFSVDKATLTRFFAFHFILPFIIAALAGVHLLFLHETGSNNPSGLCSDADKIPFHPYYTIKDILGVLLLILTLTSLVLFSPDLLGDPDNYTPANPLNTPPHIKPEWYFLFAYAILRSIPNKLGGVLALVLSILILAVVPFLHTSKQRSMMFRPFSQCLFWILVADLLTLTWIGGQPVEHPFIIIGQLASILYFLLILVIMPITSLFENNLLKW</sequence>
<gene>
    <name type="primary">MT-CYB</name>
    <name type="synonym">COB</name>
    <name type="synonym">CYTB</name>
    <name type="synonym">MTCYB</name>
</gene>
<evidence type="ECO:0000250" key="1"/>
<evidence type="ECO:0000250" key="2">
    <source>
        <dbReference type="UniProtKB" id="P00157"/>
    </source>
</evidence>
<evidence type="ECO:0000255" key="3">
    <source>
        <dbReference type="PROSITE-ProRule" id="PRU00967"/>
    </source>
</evidence>
<evidence type="ECO:0000255" key="4">
    <source>
        <dbReference type="PROSITE-ProRule" id="PRU00968"/>
    </source>
</evidence>
<dbReference type="EMBL" id="AJ000417">
    <property type="protein sequence ID" value="CAA04065.2"/>
    <property type="molecule type" value="Genomic_DNA"/>
</dbReference>
<dbReference type="EMBL" id="AJ000418">
    <property type="protein sequence ID" value="CAA04066.1"/>
    <property type="molecule type" value="Genomic_DNA"/>
</dbReference>
<dbReference type="SMR" id="O79996"/>
<dbReference type="GO" id="GO:0005743">
    <property type="term" value="C:mitochondrial inner membrane"/>
    <property type="evidence" value="ECO:0007669"/>
    <property type="project" value="UniProtKB-SubCell"/>
</dbReference>
<dbReference type="GO" id="GO:0045275">
    <property type="term" value="C:respiratory chain complex III"/>
    <property type="evidence" value="ECO:0007669"/>
    <property type="project" value="InterPro"/>
</dbReference>
<dbReference type="GO" id="GO:0046872">
    <property type="term" value="F:metal ion binding"/>
    <property type="evidence" value="ECO:0007669"/>
    <property type="project" value="UniProtKB-KW"/>
</dbReference>
<dbReference type="GO" id="GO:0008121">
    <property type="term" value="F:ubiquinol-cytochrome-c reductase activity"/>
    <property type="evidence" value="ECO:0007669"/>
    <property type="project" value="InterPro"/>
</dbReference>
<dbReference type="GO" id="GO:0006122">
    <property type="term" value="P:mitochondrial electron transport, ubiquinol to cytochrome c"/>
    <property type="evidence" value="ECO:0007669"/>
    <property type="project" value="TreeGrafter"/>
</dbReference>
<dbReference type="CDD" id="cd00290">
    <property type="entry name" value="cytochrome_b_C"/>
    <property type="match status" value="1"/>
</dbReference>
<dbReference type="CDD" id="cd00284">
    <property type="entry name" value="Cytochrome_b_N"/>
    <property type="match status" value="1"/>
</dbReference>
<dbReference type="FunFam" id="1.20.810.10:FF:000002">
    <property type="entry name" value="Cytochrome b"/>
    <property type="match status" value="1"/>
</dbReference>
<dbReference type="Gene3D" id="1.20.810.10">
    <property type="entry name" value="Cytochrome Bc1 Complex, Chain C"/>
    <property type="match status" value="1"/>
</dbReference>
<dbReference type="InterPro" id="IPR005798">
    <property type="entry name" value="Cyt_b/b6_C"/>
</dbReference>
<dbReference type="InterPro" id="IPR036150">
    <property type="entry name" value="Cyt_b/b6_C_sf"/>
</dbReference>
<dbReference type="InterPro" id="IPR005797">
    <property type="entry name" value="Cyt_b/b6_N"/>
</dbReference>
<dbReference type="InterPro" id="IPR027387">
    <property type="entry name" value="Cytb/b6-like_sf"/>
</dbReference>
<dbReference type="InterPro" id="IPR030689">
    <property type="entry name" value="Cytochrome_b"/>
</dbReference>
<dbReference type="InterPro" id="IPR048260">
    <property type="entry name" value="Cytochrome_b_C_euk/bac"/>
</dbReference>
<dbReference type="InterPro" id="IPR048259">
    <property type="entry name" value="Cytochrome_b_N_euk/bac"/>
</dbReference>
<dbReference type="InterPro" id="IPR016174">
    <property type="entry name" value="Di-haem_cyt_TM"/>
</dbReference>
<dbReference type="PANTHER" id="PTHR19271">
    <property type="entry name" value="CYTOCHROME B"/>
    <property type="match status" value="1"/>
</dbReference>
<dbReference type="PANTHER" id="PTHR19271:SF16">
    <property type="entry name" value="CYTOCHROME B"/>
    <property type="match status" value="1"/>
</dbReference>
<dbReference type="Pfam" id="PF00032">
    <property type="entry name" value="Cytochrom_B_C"/>
    <property type="match status" value="1"/>
</dbReference>
<dbReference type="Pfam" id="PF00033">
    <property type="entry name" value="Cytochrome_B"/>
    <property type="match status" value="1"/>
</dbReference>
<dbReference type="PIRSF" id="PIRSF038885">
    <property type="entry name" value="COB"/>
    <property type="match status" value="1"/>
</dbReference>
<dbReference type="SUPFAM" id="SSF81648">
    <property type="entry name" value="a domain/subunit of cytochrome bc1 complex (Ubiquinol-cytochrome c reductase)"/>
    <property type="match status" value="1"/>
</dbReference>
<dbReference type="SUPFAM" id="SSF81342">
    <property type="entry name" value="Transmembrane di-heme cytochromes"/>
    <property type="match status" value="1"/>
</dbReference>
<dbReference type="PROSITE" id="PS51003">
    <property type="entry name" value="CYTB_CTER"/>
    <property type="match status" value="1"/>
</dbReference>
<dbReference type="PROSITE" id="PS51002">
    <property type="entry name" value="CYTB_NTER"/>
    <property type="match status" value="1"/>
</dbReference>
<proteinExistence type="inferred from homology"/>
<comment type="function">
    <text evidence="2">Component of the ubiquinol-cytochrome c reductase complex (complex III or cytochrome b-c1 complex) that is part of the mitochondrial respiratory chain. The b-c1 complex mediates electron transfer from ubiquinol to cytochrome c. Contributes to the generation of a proton gradient across the mitochondrial membrane that is then used for ATP synthesis.</text>
</comment>
<comment type="cofactor">
    <cofactor evidence="2">
        <name>heme b</name>
        <dbReference type="ChEBI" id="CHEBI:60344"/>
    </cofactor>
    <text evidence="2">Binds 2 heme b groups non-covalently.</text>
</comment>
<comment type="subunit">
    <text evidence="2">The cytochrome bc1 complex contains 11 subunits: 3 respiratory subunits (MT-CYB, CYC1 and UQCRFS1), 2 core proteins (UQCRC1 and UQCRC2) and 6 low-molecular weight proteins (UQCRH/QCR6, UQCRB/QCR7, UQCRQ/QCR8, UQCR10/QCR9, UQCR11/QCR10 and a cleavage product of UQCRFS1). This cytochrome bc1 complex then forms a dimer.</text>
</comment>
<comment type="subcellular location">
    <subcellularLocation>
        <location evidence="2">Mitochondrion inner membrane</location>
        <topology evidence="2">Multi-pass membrane protein</topology>
    </subcellularLocation>
</comment>
<comment type="miscellaneous">
    <text evidence="1">Heme 1 (or BL or b562) is low-potential and absorbs at about 562 nm, and heme 2 (or BH or b566) is high-potential and absorbs at about 566 nm.</text>
</comment>
<comment type="similarity">
    <text evidence="3 4">Belongs to the cytochrome b family.</text>
</comment>
<comment type="caution">
    <text evidence="2">The full-length protein contains only eight transmembrane helices, not nine as predicted by bioinformatics tools.</text>
</comment>
<accession>O79996</accession>
<geneLocation type="mitochondrion"/>
<keyword id="KW-0249">Electron transport</keyword>
<keyword id="KW-0349">Heme</keyword>
<keyword id="KW-0408">Iron</keyword>
<keyword id="KW-0472">Membrane</keyword>
<keyword id="KW-0479">Metal-binding</keyword>
<keyword id="KW-0496">Mitochondrion</keyword>
<keyword id="KW-0999">Mitochondrion inner membrane</keyword>
<keyword id="KW-0679">Respiratory chain</keyword>
<keyword id="KW-0812">Transmembrane</keyword>
<keyword id="KW-1133">Transmembrane helix</keyword>
<keyword id="KW-0813">Transport</keyword>
<keyword id="KW-0830">Ubiquinone</keyword>
<name>CYB_SORGA</name>
<reference key="1">
    <citation type="submission" date="2002-10" db="EMBL/GenBank/DDBJ databases">
        <authorList>
            <person name="Fumagalli L."/>
        </authorList>
    </citation>
    <scope>NUCLEOTIDE SEQUENCE [GENOMIC DNA]</scope>
</reference>
<reference key="2">
    <citation type="journal article" date="1999" name="Mol. Phylogenet. Evol.">
        <title>Molecular phylogeny and evolution of Sorex shrews (Soricidae: Insectivora) inferred from mitochondrial DNA sequence data.</title>
        <authorList>
            <person name="Fumagalli L."/>
            <person name="Taberlet P."/>
            <person name="Stewart D.T."/>
            <person name="Gielly L."/>
            <person name="Hausser J."/>
            <person name="Vogel P."/>
        </authorList>
    </citation>
    <scope>NUCLEOTIDE SEQUENCE [GENOMIC DNA] OF 44-379</scope>
</reference>
<feature type="chain" id="PRO_0000061560" description="Cytochrome b">
    <location>
        <begin position="1"/>
        <end position="379"/>
    </location>
</feature>
<feature type="transmembrane region" description="Helical" evidence="2">
    <location>
        <begin position="33"/>
        <end position="53"/>
    </location>
</feature>
<feature type="transmembrane region" description="Helical" evidence="2">
    <location>
        <begin position="77"/>
        <end position="98"/>
    </location>
</feature>
<feature type="transmembrane region" description="Helical" evidence="2">
    <location>
        <begin position="113"/>
        <end position="133"/>
    </location>
</feature>
<feature type="transmembrane region" description="Helical" evidence="2">
    <location>
        <begin position="178"/>
        <end position="198"/>
    </location>
</feature>
<feature type="transmembrane region" description="Helical" evidence="2">
    <location>
        <begin position="226"/>
        <end position="246"/>
    </location>
</feature>
<feature type="transmembrane region" description="Helical" evidence="2">
    <location>
        <begin position="288"/>
        <end position="308"/>
    </location>
</feature>
<feature type="transmembrane region" description="Helical" evidence="2">
    <location>
        <begin position="320"/>
        <end position="340"/>
    </location>
</feature>
<feature type="transmembrane region" description="Helical" evidence="2">
    <location>
        <begin position="347"/>
        <end position="367"/>
    </location>
</feature>
<feature type="binding site" description="axial binding residue" evidence="2">
    <location>
        <position position="83"/>
    </location>
    <ligand>
        <name>heme b</name>
        <dbReference type="ChEBI" id="CHEBI:60344"/>
        <label>b562</label>
    </ligand>
    <ligandPart>
        <name>Fe</name>
        <dbReference type="ChEBI" id="CHEBI:18248"/>
    </ligandPart>
</feature>
<feature type="binding site" description="axial binding residue" evidence="2">
    <location>
        <position position="97"/>
    </location>
    <ligand>
        <name>heme b</name>
        <dbReference type="ChEBI" id="CHEBI:60344"/>
        <label>b566</label>
    </ligand>
    <ligandPart>
        <name>Fe</name>
        <dbReference type="ChEBI" id="CHEBI:18248"/>
    </ligandPart>
</feature>
<feature type="binding site" description="axial binding residue" evidence="2">
    <location>
        <position position="182"/>
    </location>
    <ligand>
        <name>heme b</name>
        <dbReference type="ChEBI" id="CHEBI:60344"/>
        <label>b562</label>
    </ligand>
    <ligandPart>
        <name>Fe</name>
        <dbReference type="ChEBI" id="CHEBI:18248"/>
    </ligandPart>
</feature>
<feature type="binding site" description="axial binding residue" evidence="2">
    <location>
        <position position="196"/>
    </location>
    <ligand>
        <name>heme b</name>
        <dbReference type="ChEBI" id="CHEBI:60344"/>
        <label>b566</label>
    </ligand>
    <ligandPart>
        <name>Fe</name>
        <dbReference type="ChEBI" id="CHEBI:18248"/>
    </ligandPart>
</feature>
<feature type="binding site" evidence="2">
    <location>
        <position position="201"/>
    </location>
    <ligand>
        <name>a ubiquinone</name>
        <dbReference type="ChEBI" id="CHEBI:16389"/>
    </ligand>
</feature>
<organism>
    <name type="scientific">Sorex granarius</name>
    <name type="common">Iberian shrew</name>
    <dbReference type="NCBI Taxonomy" id="62894"/>
    <lineage>
        <taxon>Eukaryota</taxon>
        <taxon>Metazoa</taxon>
        <taxon>Chordata</taxon>
        <taxon>Craniata</taxon>
        <taxon>Vertebrata</taxon>
        <taxon>Euteleostomi</taxon>
        <taxon>Mammalia</taxon>
        <taxon>Eutheria</taxon>
        <taxon>Laurasiatheria</taxon>
        <taxon>Eulipotyphla</taxon>
        <taxon>Soricidae</taxon>
        <taxon>Soricinae</taxon>
        <taxon>Sorex</taxon>
    </lineage>
</organism>